<dbReference type="EMBL" id="AF077866">
    <property type="protein sequence ID" value="AAC61479.1"/>
    <property type="molecule type" value="mRNA"/>
</dbReference>
<dbReference type="EMBL" id="AF104032">
    <property type="protein sequence ID" value="AAD20464.1"/>
    <property type="molecule type" value="mRNA"/>
</dbReference>
<dbReference type="EMBL" id="AB018542">
    <property type="protein sequence ID" value="BAA33851.1"/>
    <property type="molecule type" value="mRNA"/>
</dbReference>
<dbReference type="EMBL" id="AB018009">
    <property type="protein sequence ID" value="BAA84648.1"/>
    <property type="molecule type" value="mRNA"/>
</dbReference>
<dbReference type="EMBL" id="AB017908">
    <property type="protein sequence ID" value="BAA75746.1"/>
    <property type="molecule type" value="mRNA"/>
</dbReference>
<dbReference type="EMBL" id="BC039692">
    <property type="protein sequence ID" value="AAH39692.1"/>
    <property type="molecule type" value="mRNA"/>
</dbReference>
<dbReference type="EMBL" id="BC042600">
    <property type="protein sequence ID" value="AAH42600.1"/>
    <property type="molecule type" value="mRNA"/>
</dbReference>
<dbReference type="EMBL" id="M80244">
    <property type="protein sequence ID" value="AAA35780.1"/>
    <property type="molecule type" value="mRNA"/>
</dbReference>
<dbReference type="CCDS" id="CCDS10964.1"/>
<dbReference type="PIR" id="JG0165">
    <property type="entry name" value="JG0165"/>
</dbReference>
<dbReference type="RefSeq" id="NP_003477.4">
    <property type="nucleotide sequence ID" value="NM_003486.6"/>
</dbReference>
<dbReference type="PDB" id="6IRS">
    <property type="method" value="EM"/>
    <property type="resolution" value="3.30 A"/>
    <property type="chains" value="B=2-507"/>
</dbReference>
<dbReference type="PDB" id="6IRT">
    <property type="method" value="EM"/>
    <property type="resolution" value="3.50 A"/>
    <property type="chains" value="B=2-507"/>
</dbReference>
<dbReference type="PDB" id="6JMQ">
    <property type="method" value="EM"/>
    <property type="resolution" value="3.31 A"/>
    <property type="chains" value="A=1-507"/>
</dbReference>
<dbReference type="PDB" id="7DSK">
    <property type="method" value="EM"/>
    <property type="resolution" value="2.90 A"/>
    <property type="chains" value="B=2-507"/>
</dbReference>
<dbReference type="PDB" id="7DSL">
    <property type="method" value="EM"/>
    <property type="resolution" value="2.90 A"/>
    <property type="chains" value="B=2-507"/>
</dbReference>
<dbReference type="PDB" id="7DSN">
    <property type="method" value="EM"/>
    <property type="resolution" value="3.10 A"/>
    <property type="chains" value="B=2-507"/>
</dbReference>
<dbReference type="PDB" id="7DSQ">
    <property type="method" value="EM"/>
    <property type="resolution" value="3.40 A"/>
    <property type="chains" value="B=2-507"/>
</dbReference>
<dbReference type="PDB" id="8IDA">
    <property type="method" value="EM"/>
    <property type="resolution" value="3.20 A"/>
    <property type="chains" value="B=2-507"/>
</dbReference>
<dbReference type="PDB" id="8J8L">
    <property type="method" value="EM"/>
    <property type="resolution" value="3.56 A"/>
    <property type="chains" value="B=2-507"/>
</dbReference>
<dbReference type="PDB" id="8J8M">
    <property type="method" value="EM"/>
    <property type="resolution" value="3.58 A"/>
    <property type="chains" value="B=2-507"/>
</dbReference>
<dbReference type="PDB" id="8KDD">
    <property type="method" value="EM"/>
    <property type="resolution" value="3.83 A"/>
    <property type="chains" value="B=1-507"/>
</dbReference>
<dbReference type="PDB" id="8KDF">
    <property type="method" value="EM"/>
    <property type="resolution" value="3.89 A"/>
    <property type="chains" value="B=1-507"/>
</dbReference>
<dbReference type="PDB" id="8KDG">
    <property type="method" value="EM"/>
    <property type="resolution" value="3.68 A"/>
    <property type="chains" value="B=1-507"/>
</dbReference>
<dbReference type="PDB" id="8KDH">
    <property type="method" value="EM"/>
    <property type="resolution" value="3.78 A"/>
    <property type="chains" value="B=1-507"/>
</dbReference>
<dbReference type="PDB" id="8KDI">
    <property type="method" value="EM"/>
    <property type="resolution" value="3.58 A"/>
    <property type="chains" value="B=1-507"/>
</dbReference>
<dbReference type="PDB" id="8KDJ">
    <property type="method" value="EM"/>
    <property type="resolution" value="3.73 A"/>
    <property type="chains" value="B=1-507"/>
</dbReference>
<dbReference type="PDB" id="8KDN">
    <property type="method" value="EM"/>
    <property type="resolution" value="4.12 A"/>
    <property type="chains" value="B=1-507"/>
</dbReference>
<dbReference type="PDB" id="8KDO">
    <property type="method" value="EM"/>
    <property type="resolution" value="4.12 A"/>
    <property type="chains" value="B=1-507"/>
</dbReference>
<dbReference type="PDB" id="8KDP">
    <property type="method" value="EM"/>
    <property type="resolution" value="4.12 A"/>
    <property type="chains" value="B=1-507"/>
</dbReference>
<dbReference type="PDB" id="8X0W">
    <property type="method" value="EM"/>
    <property type="resolution" value="3.10 A"/>
    <property type="chains" value="B=44-507"/>
</dbReference>
<dbReference type="PDB" id="8XPU">
    <property type="method" value="EM"/>
    <property type="resolution" value="3.30 A"/>
    <property type="chains" value="B=2-507"/>
</dbReference>
<dbReference type="PDBsum" id="6IRS"/>
<dbReference type="PDBsum" id="6IRT"/>
<dbReference type="PDBsum" id="6JMQ"/>
<dbReference type="PDBsum" id="7DSK"/>
<dbReference type="PDBsum" id="7DSL"/>
<dbReference type="PDBsum" id="7DSN"/>
<dbReference type="PDBsum" id="7DSQ"/>
<dbReference type="PDBsum" id="8IDA"/>
<dbReference type="PDBsum" id="8J8L"/>
<dbReference type="PDBsum" id="8J8M"/>
<dbReference type="PDBsum" id="8KDD"/>
<dbReference type="PDBsum" id="8KDF"/>
<dbReference type="PDBsum" id="8KDG"/>
<dbReference type="PDBsum" id="8KDH"/>
<dbReference type="PDBsum" id="8KDI"/>
<dbReference type="PDBsum" id="8KDJ"/>
<dbReference type="PDBsum" id="8KDN"/>
<dbReference type="PDBsum" id="8KDO"/>
<dbReference type="PDBsum" id="8KDP"/>
<dbReference type="PDBsum" id="8X0W"/>
<dbReference type="PDBsum" id="8XPU"/>
<dbReference type="EMDB" id="EMD-30835"/>
<dbReference type="EMDB" id="EMD-30837"/>
<dbReference type="EMDB" id="EMD-30839"/>
<dbReference type="EMDB" id="EMD-30841"/>
<dbReference type="EMDB" id="EMD-35361"/>
<dbReference type="EMDB" id="EMD-36073"/>
<dbReference type="EMDB" id="EMD-36074"/>
<dbReference type="EMDB" id="EMD-37132"/>
<dbReference type="EMDB" id="EMD-37134"/>
<dbReference type="EMDB" id="EMD-37135"/>
<dbReference type="EMDB" id="EMD-37136"/>
<dbReference type="EMDB" id="EMD-37137"/>
<dbReference type="EMDB" id="EMD-37138"/>
<dbReference type="EMDB" id="EMD-37140"/>
<dbReference type="EMDB" id="EMD-37141"/>
<dbReference type="EMDB" id="EMD-37142"/>
<dbReference type="EMDB" id="EMD-37983"/>
<dbReference type="EMDB" id="EMD-38561"/>
<dbReference type="EMDB" id="EMD-4642"/>
<dbReference type="EMDB" id="EMD-9721"/>
<dbReference type="EMDB" id="EMD-9722"/>
<dbReference type="EMDB" id="EMD-9849"/>
<dbReference type="SMR" id="Q01650"/>
<dbReference type="BioGRID" id="113801">
    <property type="interactions" value="201"/>
</dbReference>
<dbReference type="ComplexPortal" id="CPX-8185">
    <property type="entry name" value="LAT1-4F2 heteromeric amino acid transporter complex"/>
</dbReference>
<dbReference type="CORUM" id="Q01650"/>
<dbReference type="FunCoup" id="Q01650">
    <property type="interactions" value="1032"/>
</dbReference>
<dbReference type="IntAct" id="Q01650">
    <property type="interactions" value="68"/>
</dbReference>
<dbReference type="MINT" id="Q01650"/>
<dbReference type="STRING" id="9606.ENSP00000261622"/>
<dbReference type="BindingDB" id="Q01650"/>
<dbReference type="ChEMBL" id="CHEMBL4459"/>
<dbReference type="DrugBank" id="DB01746">
    <property type="generic name" value="D-Leucine"/>
</dbReference>
<dbReference type="DrugBank" id="DB02556">
    <property type="generic name" value="D-Phenylalanine"/>
</dbReference>
<dbReference type="DrugBank" id="DB00509">
    <property type="generic name" value="Dextrothyroxine"/>
</dbReference>
<dbReference type="DrugBank" id="DB00996">
    <property type="generic name" value="Gabapentin"/>
</dbReference>
<dbReference type="DrugBank" id="DB00130">
    <property type="generic name" value="L-Glutamine"/>
</dbReference>
<dbReference type="DrugBank" id="DB01235">
    <property type="generic name" value="Levodopa"/>
</dbReference>
<dbReference type="DrugBank" id="DB00451">
    <property type="generic name" value="Levothyroxine"/>
</dbReference>
<dbReference type="DrugBank" id="DB00279">
    <property type="generic name" value="Liothyronine"/>
</dbReference>
<dbReference type="DrugBank" id="DB01042">
    <property type="generic name" value="Melphalan"/>
</dbReference>
<dbReference type="DrugBank" id="DB00230">
    <property type="generic name" value="Pregabalin"/>
</dbReference>
<dbReference type="DrugBank" id="DB02750">
    <property type="generic name" value="S-(Methylmercury)-L-Cysteine"/>
</dbReference>
<dbReference type="DrugBank" id="DB09100">
    <property type="generic name" value="Thyroid, porcine"/>
</dbReference>
<dbReference type="DrugCentral" id="Q01650"/>
<dbReference type="TCDB" id="2.A.3.8.25">
    <property type="family name" value="the amino acid-polyamine-organocation (apc) family"/>
</dbReference>
<dbReference type="GlyGen" id="Q01650">
    <property type="glycosylation" value="2 sites, 1 O-linked glycan (1 site)"/>
</dbReference>
<dbReference type="iPTMnet" id="Q01650"/>
<dbReference type="PhosphoSitePlus" id="Q01650"/>
<dbReference type="SwissPalm" id="Q01650"/>
<dbReference type="BioMuta" id="SLC7A5"/>
<dbReference type="DMDM" id="12643412"/>
<dbReference type="jPOST" id="Q01650"/>
<dbReference type="MassIVE" id="Q01650"/>
<dbReference type="PaxDb" id="9606-ENSP00000261622"/>
<dbReference type="PeptideAtlas" id="Q01650"/>
<dbReference type="ProteomicsDB" id="57978"/>
<dbReference type="Pumba" id="Q01650"/>
<dbReference type="TopDownProteomics" id="Q01650"/>
<dbReference type="Antibodypedia" id="17241">
    <property type="antibodies" value="405 antibodies from 37 providers"/>
</dbReference>
<dbReference type="DNASU" id="8140"/>
<dbReference type="Ensembl" id="ENST00000261622.5">
    <property type="protein sequence ID" value="ENSP00000261622.4"/>
    <property type="gene ID" value="ENSG00000103257.10"/>
</dbReference>
<dbReference type="GeneID" id="8140"/>
<dbReference type="KEGG" id="hsa:8140"/>
<dbReference type="MANE-Select" id="ENST00000261622.5">
    <property type="protein sequence ID" value="ENSP00000261622.4"/>
    <property type="RefSeq nucleotide sequence ID" value="NM_003486.7"/>
    <property type="RefSeq protein sequence ID" value="NP_003477.4"/>
</dbReference>
<dbReference type="UCSC" id="uc002fkm.4">
    <property type="organism name" value="human"/>
</dbReference>
<dbReference type="AGR" id="HGNC:11063"/>
<dbReference type="CTD" id="8140"/>
<dbReference type="DisGeNET" id="8140"/>
<dbReference type="GeneCards" id="SLC7A5"/>
<dbReference type="HGNC" id="HGNC:11063">
    <property type="gene designation" value="SLC7A5"/>
</dbReference>
<dbReference type="HPA" id="ENSG00000103257">
    <property type="expression patterns" value="Tissue enhanced (bone marrow, esophagus)"/>
</dbReference>
<dbReference type="MalaCards" id="SLC7A5"/>
<dbReference type="MIM" id="600182">
    <property type="type" value="gene"/>
</dbReference>
<dbReference type="neXtProt" id="NX_Q01650"/>
<dbReference type="OpenTargets" id="ENSG00000103257"/>
<dbReference type="PharmGKB" id="PA35923"/>
<dbReference type="VEuPathDB" id="HostDB:ENSG00000103257"/>
<dbReference type="eggNOG" id="KOG1287">
    <property type="taxonomic scope" value="Eukaryota"/>
</dbReference>
<dbReference type="GeneTree" id="ENSGT00940000155581"/>
<dbReference type="HOGENOM" id="CLU_007946_3_0_1"/>
<dbReference type="InParanoid" id="Q01650"/>
<dbReference type="OMA" id="AWCQKVM"/>
<dbReference type="OrthoDB" id="10062876at2759"/>
<dbReference type="PAN-GO" id="Q01650">
    <property type="GO annotations" value="2 GO annotations based on evolutionary models"/>
</dbReference>
<dbReference type="PhylomeDB" id="Q01650"/>
<dbReference type="TreeFam" id="TF313355"/>
<dbReference type="BioCyc" id="MetaCyc:ENSG00000103257-MONOMER"/>
<dbReference type="PathwayCommons" id="Q01650"/>
<dbReference type="Reactome" id="R-HSA-210991">
    <property type="pathway name" value="Basigin interactions"/>
</dbReference>
<dbReference type="Reactome" id="R-HSA-352230">
    <property type="pathway name" value="Amino acid transport across the plasma membrane"/>
</dbReference>
<dbReference type="Reactome" id="R-HSA-71240">
    <property type="pathway name" value="Tryptophan catabolism"/>
</dbReference>
<dbReference type="SABIO-RK" id="Q01650"/>
<dbReference type="SignaLink" id="Q01650"/>
<dbReference type="BioGRID-ORCS" id="8140">
    <property type="hits" value="293 hits in 1180 CRISPR screens"/>
</dbReference>
<dbReference type="ChiTaRS" id="SLC7A5">
    <property type="organism name" value="human"/>
</dbReference>
<dbReference type="GeneWiki" id="SLC7A5"/>
<dbReference type="GenomeRNAi" id="8140"/>
<dbReference type="Pharos" id="Q01650">
    <property type="development level" value="Tchem"/>
</dbReference>
<dbReference type="PRO" id="PR:Q01650"/>
<dbReference type="Proteomes" id="UP000005640">
    <property type="component" value="Chromosome 16"/>
</dbReference>
<dbReference type="RNAct" id="Q01650">
    <property type="molecule type" value="protein"/>
</dbReference>
<dbReference type="Bgee" id="ENSG00000103257">
    <property type="expression patterns" value="Expressed in pigmented layer of retina and 192 other cell types or tissues"/>
</dbReference>
<dbReference type="ExpressionAtlas" id="Q01650">
    <property type="expression patterns" value="baseline and differential"/>
</dbReference>
<dbReference type="GO" id="GO:1990184">
    <property type="term" value="C:amino acid transport complex"/>
    <property type="evidence" value="ECO:0000314"/>
    <property type="project" value="UniProtKB"/>
</dbReference>
<dbReference type="GO" id="GO:0016324">
    <property type="term" value="C:apical plasma membrane"/>
    <property type="evidence" value="ECO:0000314"/>
    <property type="project" value="UniProtKB"/>
</dbReference>
<dbReference type="GO" id="GO:0009925">
    <property type="term" value="C:basal plasma membrane"/>
    <property type="evidence" value="ECO:0000250"/>
    <property type="project" value="ARUK-UCL"/>
</dbReference>
<dbReference type="GO" id="GO:0016323">
    <property type="term" value="C:basolateral plasma membrane"/>
    <property type="evidence" value="ECO:0000250"/>
    <property type="project" value="ARUK-UCL"/>
</dbReference>
<dbReference type="GO" id="GO:0005829">
    <property type="term" value="C:cytosol"/>
    <property type="evidence" value="ECO:0000314"/>
    <property type="project" value="HPA"/>
</dbReference>
<dbReference type="GO" id="GO:0098591">
    <property type="term" value="C:external side of apical plasma membrane"/>
    <property type="evidence" value="ECO:0000250"/>
    <property type="project" value="ARUK-UCL"/>
</dbReference>
<dbReference type="GO" id="GO:0070062">
    <property type="term" value="C:extracellular exosome"/>
    <property type="evidence" value="ECO:0007005"/>
    <property type="project" value="UniProtKB"/>
</dbReference>
<dbReference type="GO" id="GO:0043231">
    <property type="term" value="C:intracellular membrane-bounded organelle"/>
    <property type="evidence" value="ECO:0000314"/>
    <property type="project" value="HPA"/>
</dbReference>
<dbReference type="GO" id="GO:0005765">
    <property type="term" value="C:lysosomal membrane"/>
    <property type="evidence" value="ECO:0007669"/>
    <property type="project" value="UniProtKB-SubCell"/>
</dbReference>
<dbReference type="GO" id="GO:0016020">
    <property type="term" value="C:membrane"/>
    <property type="evidence" value="ECO:0000314"/>
    <property type="project" value="UniProtKB"/>
</dbReference>
<dbReference type="GO" id="GO:0031528">
    <property type="term" value="C:microvillus membrane"/>
    <property type="evidence" value="ECO:0000314"/>
    <property type="project" value="ARUK-UCL"/>
</dbReference>
<dbReference type="GO" id="GO:0005886">
    <property type="term" value="C:plasma membrane"/>
    <property type="evidence" value="ECO:0000314"/>
    <property type="project" value="UniProtKB"/>
</dbReference>
<dbReference type="GO" id="GO:0015171">
    <property type="term" value="F:amino acid transmembrane transporter activity"/>
    <property type="evidence" value="ECO:0000314"/>
    <property type="project" value="ARUK-UCL"/>
</dbReference>
<dbReference type="GO" id="GO:0015297">
    <property type="term" value="F:antiporter activity"/>
    <property type="evidence" value="ECO:0000314"/>
    <property type="project" value="UniProtKB"/>
</dbReference>
<dbReference type="GO" id="GO:0015173">
    <property type="term" value="F:aromatic amino acid transmembrane transporter activity"/>
    <property type="evidence" value="ECO:0000316"/>
    <property type="project" value="ARUK-UCL"/>
</dbReference>
<dbReference type="GO" id="GO:0015179">
    <property type="term" value="F:L-amino acid transmembrane transporter activity"/>
    <property type="evidence" value="ECO:0000318"/>
    <property type="project" value="GO_Central"/>
</dbReference>
<dbReference type="GO" id="GO:0015190">
    <property type="term" value="F:L-leucine transmembrane transporter activity"/>
    <property type="evidence" value="ECO:0000314"/>
    <property type="project" value="UniProtKB"/>
</dbReference>
<dbReference type="GO" id="GO:0015196">
    <property type="term" value="F:L-tryptophan transmembrane transporter activity"/>
    <property type="evidence" value="ECO:0000314"/>
    <property type="project" value="UniProtKB"/>
</dbReference>
<dbReference type="GO" id="GO:0015175">
    <property type="term" value="F:neutral L-amino acid transmembrane transporter activity"/>
    <property type="evidence" value="ECO:0000314"/>
    <property type="project" value="ARUK-UCL"/>
</dbReference>
<dbReference type="GO" id="GO:0042605">
    <property type="term" value="F:peptide antigen binding"/>
    <property type="evidence" value="ECO:0000250"/>
    <property type="project" value="UniProtKB"/>
</dbReference>
<dbReference type="GO" id="GO:0015349">
    <property type="term" value="F:thyroid hormone transmembrane transporter activity"/>
    <property type="evidence" value="ECO:0000314"/>
    <property type="project" value="ARUK-UCL"/>
</dbReference>
<dbReference type="GO" id="GO:0032328">
    <property type="term" value="P:alanine transport"/>
    <property type="evidence" value="ECO:0000314"/>
    <property type="project" value="UniProtKB"/>
</dbReference>
<dbReference type="GO" id="GO:0089718">
    <property type="term" value="P:amino acid import across plasma membrane"/>
    <property type="evidence" value="ECO:0000314"/>
    <property type="project" value="ARUK-UCL"/>
</dbReference>
<dbReference type="GO" id="GO:0003333">
    <property type="term" value="P:amino acid transmembrane transport"/>
    <property type="evidence" value="ECO:0000318"/>
    <property type="project" value="GO_Central"/>
</dbReference>
<dbReference type="GO" id="GO:0042149">
    <property type="term" value="P:cellular response to glucose starvation"/>
    <property type="evidence" value="ECO:0007669"/>
    <property type="project" value="Ensembl"/>
</dbReference>
<dbReference type="GO" id="GO:1903577">
    <property type="term" value="P:cellular response to L-arginine"/>
    <property type="evidence" value="ECO:0007669"/>
    <property type="project" value="Ensembl"/>
</dbReference>
<dbReference type="GO" id="GO:0071222">
    <property type="term" value="P:cellular response to lipopolysaccharide"/>
    <property type="evidence" value="ECO:0007669"/>
    <property type="project" value="Ensembl"/>
</dbReference>
<dbReference type="GO" id="GO:0015818">
    <property type="term" value="P:isoleucine transport"/>
    <property type="evidence" value="ECO:0000314"/>
    <property type="project" value="UniProtKB"/>
</dbReference>
<dbReference type="GO" id="GO:1902024">
    <property type="term" value="P:L-histidine transport"/>
    <property type="evidence" value="ECO:0000314"/>
    <property type="project" value="UniProtKB"/>
</dbReference>
<dbReference type="GO" id="GO:1903801">
    <property type="term" value="P:L-leucine import across plasma membrane"/>
    <property type="evidence" value="ECO:0000314"/>
    <property type="project" value="ARUK-UCL"/>
</dbReference>
<dbReference type="GO" id="GO:0015820">
    <property type="term" value="P:L-leucine transport"/>
    <property type="evidence" value="ECO:0000314"/>
    <property type="project" value="UniProtKB"/>
</dbReference>
<dbReference type="GO" id="GO:1904556">
    <property type="term" value="P:L-tryptophan transmembrane transport"/>
    <property type="evidence" value="ECO:0000314"/>
    <property type="project" value="UniProtKB"/>
</dbReference>
<dbReference type="GO" id="GO:0097421">
    <property type="term" value="P:liver regeneration"/>
    <property type="evidence" value="ECO:0007669"/>
    <property type="project" value="Ensembl"/>
</dbReference>
<dbReference type="GO" id="GO:0015821">
    <property type="term" value="P:methionine transport"/>
    <property type="evidence" value="ECO:0000314"/>
    <property type="project" value="UniProtKB"/>
</dbReference>
<dbReference type="GO" id="GO:0010507">
    <property type="term" value="P:negative regulation of autophagy"/>
    <property type="evidence" value="ECO:0007669"/>
    <property type="project" value="Ensembl"/>
</dbReference>
<dbReference type="GO" id="GO:0010629">
    <property type="term" value="P:negative regulation of gene expression"/>
    <property type="evidence" value="ECO:0000315"/>
    <property type="project" value="ARUK-UCL"/>
</dbReference>
<dbReference type="GO" id="GO:1905460">
    <property type="term" value="P:negative regulation of vascular associated smooth muscle cell apoptotic process"/>
    <property type="evidence" value="ECO:0007669"/>
    <property type="project" value="Ensembl"/>
</dbReference>
<dbReference type="GO" id="GO:0015804">
    <property type="term" value="P:neutral amino acid transport"/>
    <property type="evidence" value="ECO:0000314"/>
    <property type="project" value="UniProtKB"/>
</dbReference>
<dbReference type="GO" id="GO:0015823">
    <property type="term" value="P:phenylalanine transport"/>
    <property type="evidence" value="ECO:0000314"/>
    <property type="project" value="UniProtKB"/>
</dbReference>
<dbReference type="GO" id="GO:0002720">
    <property type="term" value="P:positive regulation of cytokine production involved in immune response"/>
    <property type="evidence" value="ECO:0000304"/>
    <property type="project" value="ARUK-UCL"/>
</dbReference>
<dbReference type="GO" id="GO:0060252">
    <property type="term" value="P:positive regulation of glial cell proliferation"/>
    <property type="evidence" value="ECO:0007669"/>
    <property type="project" value="Ensembl"/>
</dbReference>
<dbReference type="GO" id="GO:0032740">
    <property type="term" value="P:positive regulation of interleukin-17 production"/>
    <property type="evidence" value="ECO:0000315"/>
    <property type="project" value="ARUK-UCL"/>
</dbReference>
<dbReference type="GO" id="GO:0032753">
    <property type="term" value="P:positive regulation of interleukin-4 production"/>
    <property type="evidence" value="ECO:0000315"/>
    <property type="project" value="ARUK-UCL"/>
</dbReference>
<dbReference type="GO" id="GO:1905534">
    <property type="term" value="P:positive regulation of L-leucine import across plasma membrane"/>
    <property type="evidence" value="ECO:0007669"/>
    <property type="project" value="Ensembl"/>
</dbReference>
<dbReference type="GO" id="GO:0032729">
    <property type="term" value="P:positive regulation of type II interferon production"/>
    <property type="evidence" value="ECO:0000315"/>
    <property type="project" value="ARUK-UCL"/>
</dbReference>
<dbReference type="GO" id="GO:0015824">
    <property type="term" value="P:proline transport"/>
    <property type="evidence" value="ECO:0000314"/>
    <property type="project" value="UniProtKB"/>
</dbReference>
<dbReference type="GO" id="GO:0055093">
    <property type="term" value="P:response to hyperoxia"/>
    <property type="evidence" value="ECO:0007669"/>
    <property type="project" value="Ensembl"/>
</dbReference>
<dbReference type="GO" id="GO:0014850">
    <property type="term" value="P:response to muscle activity"/>
    <property type="evidence" value="ECO:0007669"/>
    <property type="project" value="Ensembl"/>
</dbReference>
<dbReference type="GO" id="GO:0070327">
    <property type="term" value="P:thyroid hormone transport"/>
    <property type="evidence" value="ECO:0000314"/>
    <property type="project" value="UniProtKB"/>
</dbReference>
<dbReference type="GO" id="GO:0150104">
    <property type="term" value="P:transport across blood-brain barrier"/>
    <property type="evidence" value="ECO:0000303"/>
    <property type="project" value="ARUK-UCL"/>
</dbReference>
<dbReference type="GO" id="GO:0015827">
    <property type="term" value="P:tryptophan transport"/>
    <property type="evidence" value="ECO:0000314"/>
    <property type="project" value="UniProtKB"/>
</dbReference>
<dbReference type="GO" id="GO:0015828">
    <property type="term" value="P:tyrosine transport"/>
    <property type="evidence" value="ECO:0000314"/>
    <property type="project" value="UniProtKB"/>
</dbReference>
<dbReference type="GO" id="GO:0015829">
    <property type="term" value="P:valine transport"/>
    <property type="evidence" value="ECO:0000314"/>
    <property type="project" value="UniProtKB"/>
</dbReference>
<dbReference type="GO" id="GO:0042908">
    <property type="term" value="P:xenobiotic transport"/>
    <property type="evidence" value="ECO:0000315"/>
    <property type="project" value="ARUK-UCL"/>
</dbReference>
<dbReference type="FunFam" id="1.20.1740.10:FF:000112">
    <property type="entry name" value="Large neutral amino acids transporter small subunit 1"/>
    <property type="match status" value="1"/>
</dbReference>
<dbReference type="FunFam" id="1.20.1740.10:FF:000056">
    <property type="entry name" value="Y+L amino acid transporter 2"/>
    <property type="match status" value="1"/>
</dbReference>
<dbReference type="Gene3D" id="1.20.1740.10">
    <property type="entry name" value="Amino acid/polyamine transporter I"/>
    <property type="match status" value="1"/>
</dbReference>
<dbReference type="InterPro" id="IPR002293">
    <property type="entry name" value="AA/rel_permease1"/>
</dbReference>
<dbReference type="InterPro" id="IPR050598">
    <property type="entry name" value="AminoAcid_Transporter"/>
</dbReference>
<dbReference type="InterPro" id="IPR004760">
    <property type="entry name" value="L_AA_transporter"/>
</dbReference>
<dbReference type="NCBIfam" id="TIGR00911">
    <property type="entry name" value="2A0308"/>
    <property type="match status" value="1"/>
</dbReference>
<dbReference type="PANTHER" id="PTHR11785">
    <property type="entry name" value="AMINO ACID TRANSPORTER"/>
    <property type="match status" value="1"/>
</dbReference>
<dbReference type="PANTHER" id="PTHR11785:SF315">
    <property type="entry name" value="LARGE NEUTRAL AMINO ACIDS TRANSPORTER SMALL SUBUNIT 1"/>
    <property type="match status" value="1"/>
</dbReference>
<dbReference type="Pfam" id="PF13520">
    <property type="entry name" value="AA_permease_2"/>
    <property type="match status" value="1"/>
</dbReference>
<dbReference type="PIRSF" id="PIRSF006060">
    <property type="entry name" value="AA_transporter"/>
    <property type="match status" value="1"/>
</dbReference>
<name>LAT1_HUMAN</name>
<evidence type="ECO:0000250" key="1">
    <source>
        <dbReference type="UniProtKB" id="Q63016"/>
    </source>
</evidence>
<evidence type="ECO:0000250" key="2">
    <source>
        <dbReference type="UniProtKB" id="Q9Z127"/>
    </source>
</evidence>
<evidence type="ECO:0000256" key="3">
    <source>
        <dbReference type="SAM" id="MobiDB-lite"/>
    </source>
</evidence>
<evidence type="ECO:0000269" key="4">
    <source>
    </source>
</evidence>
<evidence type="ECO:0000269" key="5">
    <source>
    </source>
</evidence>
<evidence type="ECO:0000269" key="6">
    <source>
    </source>
</evidence>
<evidence type="ECO:0000269" key="7">
    <source>
    </source>
</evidence>
<evidence type="ECO:0000269" key="8">
    <source>
    </source>
</evidence>
<evidence type="ECO:0000269" key="9">
    <source>
    </source>
</evidence>
<evidence type="ECO:0000269" key="10">
    <source>
    </source>
</evidence>
<evidence type="ECO:0000269" key="11">
    <source>
    </source>
</evidence>
<evidence type="ECO:0000269" key="12">
    <source>
    </source>
</evidence>
<evidence type="ECO:0000269" key="13">
    <source>
    </source>
</evidence>
<evidence type="ECO:0000269" key="14">
    <source>
    </source>
</evidence>
<evidence type="ECO:0000269" key="15">
    <source>
    </source>
</evidence>
<evidence type="ECO:0000269" key="16">
    <source>
    </source>
</evidence>
<evidence type="ECO:0000269" key="17">
    <source>
    </source>
</evidence>
<evidence type="ECO:0000269" key="18">
    <source>
    </source>
</evidence>
<evidence type="ECO:0000269" key="19">
    <source>
    </source>
</evidence>
<evidence type="ECO:0000269" key="20">
    <source>
    </source>
</evidence>
<evidence type="ECO:0000269" key="21">
    <source>
    </source>
</evidence>
<evidence type="ECO:0000269" key="22">
    <source>
    </source>
</evidence>
<evidence type="ECO:0000269" key="23">
    <source>
    </source>
</evidence>
<evidence type="ECO:0000303" key="24">
    <source>
    </source>
</evidence>
<evidence type="ECO:0000303" key="25">
    <source>
    </source>
</evidence>
<evidence type="ECO:0000303" key="26">
    <source>
    </source>
</evidence>
<evidence type="ECO:0000305" key="27"/>
<evidence type="ECO:0000305" key="28">
    <source>
    </source>
</evidence>
<evidence type="ECO:0000305" key="29">
    <source>
    </source>
</evidence>
<evidence type="ECO:0000305" key="30">
    <source>
    </source>
</evidence>
<evidence type="ECO:0000305" key="31">
    <source>
    </source>
</evidence>
<evidence type="ECO:0007744" key="32">
    <source>
        <dbReference type="PDB" id="6IRS"/>
    </source>
</evidence>
<evidence type="ECO:0007744" key="33">
    <source>
        <dbReference type="PDB" id="6IRT"/>
    </source>
</evidence>
<evidence type="ECO:0007744" key="34">
    <source>
    </source>
</evidence>
<evidence type="ECO:0007744" key="35">
    <source>
    </source>
</evidence>
<evidence type="ECO:0007744" key="36">
    <source>
    </source>
</evidence>
<evidence type="ECO:0007744" key="37">
    <source>
    </source>
</evidence>
<evidence type="ECO:0007829" key="38">
    <source>
        <dbReference type="PDB" id="6IRS"/>
    </source>
</evidence>
<evidence type="ECO:0007829" key="39">
    <source>
        <dbReference type="PDB" id="7DSK"/>
    </source>
</evidence>
<evidence type="ECO:0007829" key="40">
    <source>
        <dbReference type="PDB" id="7DSL"/>
    </source>
</evidence>
<evidence type="ECO:0007829" key="41">
    <source>
        <dbReference type="PDB" id="7DSN"/>
    </source>
</evidence>
<evidence type="ECO:0007829" key="42">
    <source>
        <dbReference type="PDB" id="8IDA"/>
    </source>
</evidence>
<evidence type="ECO:0007829" key="43">
    <source>
        <dbReference type="PDB" id="8X0W"/>
    </source>
</evidence>
<reference key="1">
    <citation type="journal article" date="1998" name="Nature">
        <title>Amino-acid transport by heterodimers of 4F2hc/CD98 and members of a permease family.</title>
        <authorList>
            <person name="Mastroberardino L."/>
            <person name="Spindler B."/>
            <person name="Pfeiffer R."/>
            <person name="Skelly P.J."/>
            <person name="Loffing J."/>
            <person name="Shoemaker C.B."/>
            <person name="Verrey F."/>
        </authorList>
    </citation>
    <scope>NUCLEOTIDE SEQUENCE [MRNA]</scope>
    <scope>FUNCTION</scope>
    <scope>SUBUNIT</scope>
    <scope>INTERACTION WITH SLC3A2</scope>
    <scope>SUBCELLULAR LOCATION</scope>
    <scope>VARIANT LYS-230</scope>
    <scope>TRANSPORTER ACTIVITY</scope>
</reference>
<reference key="2">
    <citation type="journal article" date="1999" name="Biochem. Biophys. Res. Commun.">
        <title>Human LAT1, a subunit of system L amino acid transporter: molecular cloning and transport function.</title>
        <authorList>
            <person name="Prasad P.D."/>
            <person name="Wang H."/>
            <person name="Huang W."/>
            <person name="Kekuda R."/>
            <person name="Rajan D.P."/>
            <person name="Leibach F.H."/>
            <person name="Ganapathy V."/>
        </authorList>
    </citation>
    <scope>NUCLEOTIDE SEQUENCE [MRNA]</scope>
    <scope>FUNCTION</scope>
    <scope>SUBUNIT</scope>
    <scope>INTERACTION WITH SLC3A2</scope>
    <scope>TISSUE SPECIFICITY</scope>
    <scope>TRANSPORTER ACTIVITY</scope>
    <source>
        <tissue>Placenta</tissue>
    </source>
</reference>
<reference key="3">
    <citation type="journal article" date="1999" name="J. Immunol.">
        <title>Primary structure of the light chain of fusion regulatory protein-1/CD98/4F2 predicts a protein with multiple transmembrane domains that is almost identical to the amino acid transporter E16.</title>
        <authorList>
            <person name="Tsurudome M."/>
            <person name="Ito M."/>
            <person name="Takebayashi S."/>
            <person name="Okumura K."/>
            <person name="Nishio M."/>
            <person name="Kawano M."/>
            <person name="Kusagawa S."/>
            <person name="Komada H."/>
            <person name="Ito Y."/>
        </authorList>
    </citation>
    <scope>NUCLEOTIDE SEQUENCE [MRNA]</scope>
    <scope>PARTIAL PROTEIN SEQUENCE</scope>
    <scope>TISSUE SPECIFICITY</scope>
</reference>
<reference key="4">
    <citation type="journal article" date="2001" name="Biochim. Biophys. Acta">
        <title>Human L-type amino acid transporter 1 (LAT1): characterization of function and expression in tumor cell lines.</title>
        <authorList>
            <person name="Yanagida O."/>
            <person name="Kanai Y."/>
            <person name="Chairoungdua A."/>
            <person name="Kim D.K."/>
            <person name="Segawa H."/>
            <person name="Nii T."/>
            <person name="Cha S.H."/>
            <person name="Matsuo H."/>
            <person name="Fukushima J."/>
            <person name="Fukasawa Y."/>
            <person name="Tani Y."/>
            <person name="Taketani Y."/>
            <person name="Uchino H."/>
            <person name="Kim J.Y."/>
            <person name="Inatomi J."/>
            <person name="Okayasu I."/>
            <person name="Miyamoto K."/>
            <person name="Takeda E."/>
            <person name="Goya T."/>
            <person name="Endou H."/>
        </authorList>
    </citation>
    <scope>NUCLEOTIDE SEQUENCE [MRNA]</scope>
    <scope>FUNCTION</scope>
    <scope>SUBUNIT</scope>
    <scope>SUBCELLULAR LOCATION</scope>
    <scope>TISSUE SPECIFICITY</scope>
    <scope>TRANSPORTER ACTIVITY</scope>
    <scope>BIOPHYSICOCHEMICAL PROPERTIES</scope>
    <source>
        <tissue>Ovary</tissue>
    </source>
</reference>
<reference key="5">
    <citation type="submission" date="1998-09" db="EMBL/GenBank/DDBJ databases">
        <title>Human 4F2 light chain: amino acid transporter.</title>
        <authorList>
            <person name="Minato N."/>
            <person name="Iwai K."/>
            <person name="Takizawa C."/>
            <person name="Nakamura E."/>
        </authorList>
    </citation>
    <scope>NUCLEOTIDE SEQUENCE [MRNA]</scope>
</reference>
<reference key="6">
    <citation type="journal article" date="2004" name="Genome Res.">
        <title>The status, quality, and expansion of the NIH full-length cDNA project: the Mammalian Gene Collection (MGC).</title>
        <authorList>
            <consortium name="The MGC Project Team"/>
        </authorList>
    </citation>
    <scope>NUCLEOTIDE SEQUENCE [LARGE SCALE MRNA]</scope>
    <scope>VARIANT VAL-223</scope>
    <source>
        <tissue>Liver</tissue>
        <tissue>Lymph</tissue>
    </source>
</reference>
<reference key="7">
    <citation type="journal article" date="1992" name="J. Biol. Chem.">
        <title>A novel transiently expressed, integral membrane protein linked to cell activation. Molecular cloning via the rapid degradation signal AUUUA.</title>
        <authorList>
            <person name="Gaugitsch H.W."/>
            <person name="Prieschl E.E."/>
            <person name="Kalthoff F."/>
            <person name="Huber N.E."/>
            <person name="Baumruker T."/>
        </authorList>
    </citation>
    <scope>NUCLEOTIDE SEQUENCE [MRNA] OF 181-507</scope>
    <scope>TISSUE SPECIFICITY</scope>
    <scope>INDUCTION</scope>
    <source>
        <tissue>Peripheral blood lymphocyte</tissue>
    </source>
</reference>
<reference key="8">
    <citation type="journal article" date="1999" name="J. Biol. Chem.">
        <title>LAT2, a new basolateral 4F2hc/CD98-associated amino acid transporter of kidney and intestine.</title>
        <authorList>
            <person name="Rossier G."/>
            <person name="Meier C."/>
            <person name="Bauch C."/>
            <person name="Summa V."/>
            <person name="Sordat B."/>
            <person name="Verrey F."/>
            <person name="Kuehn L.C."/>
        </authorList>
    </citation>
    <scope>FUNCTION</scope>
    <scope>SUBUNIT</scope>
    <scope>TRANSPORTER ACTIVITY</scope>
</reference>
<reference key="9">
    <citation type="journal article" date="2001" name="Biochem. J.">
        <title>Role of the System L permease LAT1 in amino acid and iodothyronine transport in placenta.</title>
        <authorList>
            <person name="Ritchie J.W.A."/>
            <person name="Taylor P.M."/>
        </authorList>
    </citation>
    <scope>SUBUNIT</scope>
    <scope>SUBCELLULAR LOCATION</scope>
    <scope>TISSUE SPECIFICITY</scope>
</reference>
<reference key="10">
    <citation type="journal article" date="2001" name="Endocrinology">
        <title>Thyroid hormone transport by the heterodimeric human system L amino acid transporter.</title>
        <authorList>
            <person name="Friesema E.C.H."/>
            <person name="Docter R."/>
            <person name="Moerings E.P.C.M."/>
            <person name="Verrey F."/>
            <person name="Krenning E.P."/>
            <person name="Hennemann G."/>
            <person name="Visser T.J."/>
        </authorList>
    </citation>
    <scope>FUNCTION</scope>
    <scope>BIOPHYSICOCHEMICAL PROPERTIES</scope>
    <scope>SUBUNIT</scope>
    <scope>ACTIVITY REGULATION</scope>
    <scope>TRANSPORTER ACTIVITY</scope>
</reference>
<reference key="11">
    <citation type="journal article" date="2002" name="Am. J. Physiol.">
        <title>Expression and regulation of 4F2hc and hLAT1 in human trophoblasts.</title>
        <authorList>
            <person name="Okamoto Y."/>
            <person name="Sakata M."/>
            <person name="Ogura K."/>
            <person name="Yamamoto T."/>
            <person name="Yamaguchi M."/>
            <person name="Tasaka K."/>
            <person name="Kurachi H."/>
            <person name="Tsurudome M."/>
            <person name="Murata Y."/>
        </authorList>
    </citation>
    <scope>SUBCELLULAR LOCATION</scope>
    <scope>TISSUE SPECIFICITY</scope>
    <scope>INDUCTION</scope>
</reference>
<reference key="12">
    <citation type="journal article" date="2002" name="Biochem. J.">
        <title>Transport of a neurotoxicant by molecular mimicry: the methylmercury-L-cysteine complex is a substrate for human L-type large neutral amino acid transporter (LAT) 1 and LAT2.</title>
        <authorList>
            <person name="Simmons-Willis T.A."/>
            <person name="Koh A.S."/>
            <person name="Clarkson T.W."/>
            <person name="Ballatori N."/>
        </authorList>
    </citation>
    <scope>FUNCTION</scope>
    <scope>SUBUNIT</scope>
    <scope>BIOPHYSICOCHEMICAL PROPERTIES</scope>
    <scope>TRANSPORTER ACTIVITY</scope>
    <scope>ACTIVITY REGULATION</scope>
</reference>
<reference key="13">
    <citation type="journal article" date="2002" name="Biochim. Biophys. Acta">
        <title>Characterization of the system L amino acid transporter in T24 human bladder carcinoma cells.</title>
        <authorList>
            <person name="Kim D.K."/>
            <person name="Kanai Y."/>
            <person name="Choi H.W."/>
            <person name="Tangtrongsup S."/>
            <person name="Chairoungdua A."/>
            <person name="Babu E."/>
            <person name="Tachampa K."/>
            <person name="Anzai N."/>
            <person name="Iribe Y."/>
            <person name="Endou H."/>
        </authorList>
    </citation>
    <scope>FUNCTION</scope>
    <scope>BIOPHYSICOCHEMICAL PROPERTIES</scope>
    <scope>SUBUNIT</scope>
    <scope>SUBCELLULAR LOCATION</scope>
    <scope>ACTIVITY REGULATION</scope>
    <scope>TRANSPORTER ACTIVITY</scope>
</reference>
<reference key="14">
    <citation type="journal article" date="2003" name="Invest. Ophthalmol. Vis. Sci.">
        <title>Identification and functional characterization of a Na+-independent large neutral amino acid transporter, LAT1, in human and rabbit cornea.</title>
        <authorList>
            <person name="Jain-Vakkalagadda B."/>
            <person name="Dey S."/>
            <person name="Pal D."/>
            <person name="Mitra A.K."/>
        </authorList>
    </citation>
    <scope>TISSUE SPECIFICITY</scope>
</reference>
<reference key="15">
    <citation type="journal article" date="2005" name="Amino Acids">
        <title>Expression of LAT1 and LAT2 amino acid transporters in human and rat intestinal epithelial cells.</title>
        <authorList>
            <person name="Fraga S."/>
            <person name="Pinho M.J."/>
            <person name="Soares-da-Silva P."/>
        </authorList>
    </citation>
    <scope>TISSUE SPECIFICITY</scope>
</reference>
<reference key="16">
    <citation type="journal article" date="2005" name="J. Biol. Chem.">
        <title>Identification of stereoselective transporters for S-nitroso-L-cysteine: role of LAT1 and LAT2 in biological activity of S-nitrosothiols.</title>
        <authorList>
            <person name="Li S."/>
            <person name="Whorton A.R."/>
        </authorList>
    </citation>
    <scope>FUNCTION</scope>
    <scope>SUBUNIT</scope>
    <scope>TRANSPORTER ACTIVITY</scope>
    <scope>ACTIVITY REGULATION</scope>
</reference>
<reference key="17">
    <citation type="journal article" date="2006" name="Int. J. Cancer">
        <title>L-type amino acid transporter 1 as a potential molecular target in human astrocytic tumors.</title>
        <authorList>
            <person name="Nawashiro H."/>
            <person name="Otani N."/>
            <person name="Shinomiya N."/>
            <person name="Fukui S."/>
            <person name="Ooigawa H."/>
            <person name="Shima K."/>
            <person name="Matsuo H."/>
            <person name="Kanai Y."/>
            <person name="Endou H."/>
        </authorList>
    </citation>
    <scope>SUBCELLULAR LOCATION</scope>
    <scope>TISSUE SPECIFICITY</scope>
</reference>
<reference key="18">
    <citation type="journal article" date="2008" name="Mol. Cell">
        <title>Kinase-selective enrichment enables quantitative phosphoproteomics of the kinome across the cell cycle.</title>
        <authorList>
            <person name="Daub H."/>
            <person name="Olsen J.V."/>
            <person name="Bairlein M."/>
            <person name="Gnad F."/>
            <person name="Oppermann F.S."/>
            <person name="Korner R."/>
            <person name="Greff Z."/>
            <person name="Keri G."/>
            <person name="Stemmann O."/>
            <person name="Mann M."/>
        </authorList>
    </citation>
    <scope>IDENTIFICATION BY MASS SPECTROMETRY [LARGE SCALE ANALYSIS]</scope>
    <source>
        <tissue>Cervix carcinoma</tissue>
    </source>
</reference>
<reference key="19">
    <citation type="journal article" date="2008" name="Neurosci. Lett.">
        <title>Functional characterization of tyrosine transport in fibroblast cells from healthy controls.</title>
        <authorList>
            <person name="Vumma R."/>
            <person name="Wiesel F.A."/>
            <person name="Flyckt L."/>
            <person name="Bjerkenstedt L."/>
            <person name="Venizelos N."/>
        </authorList>
    </citation>
    <scope>FUNCTION</scope>
    <scope>BIOPHYSICOCHEMICAL PROPERTIES</scope>
    <scope>TRANSPORTER ACTIVITY</scope>
    <scope>ACTIVITY REGULATION</scope>
</reference>
<reference key="20">
    <citation type="journal article" date="2008" name="Proc. Natl. Acad. Sci. U.S.A.">
        <title>A quantitative atlas of mitotic phosphorylation.</title>
        <authorList>
            <person name="Dephoure N."/>
            <person name="Zhou C."/>
            <person name="Villen J."/>
            <person name="Beausoleil S.A."/>
            <person name="Bakalarski C.E."/>
            <person name="Elledge S.J."/>
            <person name="Gygi S.P."/>
        </authorList>
    </citation>
    <scope>IDENTIFICATION BY MASS SPECTROMETRY [LARGE SCALE ANALYSIS]</scope>
    <source>
        <tissue>Cervix carcinoma</tissue>
    </source>
</reference>
<reference key="21">
    <citation type="journal article" date="2009" name="Mol. Cell. Proteomics">
        <title>Large-scale proteomics analysis of the human kinome.</title>
        <authorList>
            <person name="Oppermann F.S."/>
            <person name="Gnad F."/>
            <person name="Olsen J.V."/>
            <person name="Hornberger R."/>
            <person name="Greff Z."/>
            <person name="Keri G."/>
            <person name="Mann M."/>
            <person name="Daub H."/>
        </authorList>
    </citation>
    <scope>PHOSPHORYLATION [LARGE SCALE ANALYSIS] AT SER-31</scope>
    <scope>IDENTIFICATION BY MASS SPECTROMETRY [LARGE SCALE ANALYSIS]</scope>
</reference>
<reference key="22">
    <citation type="journal article" date="2010" name="Sci. Signal.">
        <title>Quantitative phosphoproteomics reveals widespread full phosphorylation site occupancy during mitosis.</title>
        <authorList>
            <person name="Olsen J.V."/>
            <person name="Vermeulen M."/>
            <person name="Santamaria A."/>
            <person name="Kumar C."/>
            <person name="Miller M.L."/>
            <person name="Jensen L.J."/>
            <person name="Gnad F."/>
            <person name="Cox J."/>
            <person name="Jensen T.S."/>
            <person name="Nigg E.A."/>
            <person name="Brunak S."/>
            <person name="Mann M."/>
        </authorList>
    </citation>
    <scope>PHOSPHORYLATION [LARGE SCALE ANALYSIS] AT SER-31 AND THR-45</scope>
    <scope>IDENTIFICATION BY MASS SPECTROMETRY [LARGE SCALE ANALYSIS]</scope>
    <source>
        <tissue>Cervix carcinoma</tissue>
    </source>
</reference>
<reference key="23">
    <citation type="journal article" date="2011" name="BMC Syst. Biol.">
        <title>Initial characterization of the human central proteome.</title>
        <authorList>
            <person name="Burkard T.R."/>
            <person name="Planyavsky M."/>
            <person name="Kaupe I."/>
            <person name="Breitwieser F.P."/>
            <person name="Buerckstuemmer T."/>
            <person name="Bennett K.L."/>
            <person name="Superti-Furga G."/>
            <person name="Colinge J."/>
        </authorList>
    </citation>
    <scope>IDENTIFICATION BY MASS SPECTROMETRY [LARGE SCALE ANALYSIS]</scope>
</reference>
<reference key="24">
    <citation type="journal article" date="2011" name="Sci. Signal.">
        <title>System-wide temporal characterization of the proteome and phosphoproteome of human embryonic stem cell differentiation.</title>
        <authorList>
            <person name="Rigbolt K.T."/>
            <person name="Prokhorova T.A."/>
            <person name="Akimov V."/>
            <person name="Henningsen J."/>
            <person name="Johansen P.T."/>
            <person name="Kratchmarova I."/>
            <person name="Kassem M."/>
            <person name="Mann M."/>
            <person name="Olsen J.V."/>
            <person name="Blagoev B."/>
        </authorList>
    </citation>
    <scope>PHOSPHORYLATION [LARGE SCALE ANALYSIS] AT SER-31</scope>
    <scope>IDENTIFICATION BY MASS SPECTROMETRY [LARGE SCALE ANALYSIS]</scope>
</reference>
<reference key="25">
    <citation type="journal article" date="2013" name="J. Proteome Res.">
        <title>Toward a comprehensive characterization of a human cancer cell phosphoproteome.</title>
        <authorList>
            <person name="Zhou H."/>
            <person name="Di Palma S."/>
            <person name="Preisinger C."/>
            <person name="Peng M."/>
            <person name="Polat A.N."/>
            <person name="Heck A.J."/>
            <person name="Mohammed S."/>
        </authorList>
    </citation>
    <scope>PHOSPHORYLATION [LARGE SCALE ANALYSIS] AT SER-31; SER-35 AND THR-45</scope>
    <scope>IDENTIFICATION BY MASS SPECTROMETRY [LARGE SCALE ANALYSIS]</scope>
    <source>
        <tissue>Cervix carcinoma</tissue>
        <tissue>Erythroleukemia</tissue>
    </source>
</reference>
<reference key="26">
    <citation type="journal article" date="2015" name="Nat. Commun.">
        <title>LAPTM4b recruits the LAT1-4F2hc Leu transporter to lysosomes and promotes mTORC1 activation.</title>
        <authorList>
            <person name="Milkereit R."/>
            <person name="Persaud A."/>
            <person name="Vanoaica L."/>
            <person name="Guetg A."/>
            <person name="Verrey F."/>
            <person name="Rotin D."/>
        </authorList>
    </citation>
    <scope>INTERACTION WITH LAPTM4B AND SLC3A2</scope>
    <scope>FUNCTION</scope>
    <scope>SUBCELLULAR LOCATION</scope>
    <scope>SUBUNIT</scope>
    <scope>TRANSPORTER ACTIVITY</scope>
</reference>
<reference key="27">
    <citation type="journal article" date="2015" name="Proteomics">
        <title>N-terminome analysis of the human mitochondrial proteome.</title>
        <authorList>
            <person name="Vaca Jacome A.S."/>
            <person name="Rabilloud T."/>
            <person name="Schaeffer-Reiss C."/>
            <person name="Rompais M."/>
            <person name="Ayoub D."/>
            <person name="Lane L."/>
            <person name="Bairoch A."/>
            <person name="Van Dorsselaer A."/>
            <person name="Carapito C."/>
        </authorList>
    </citation>
    <scope>IDENTIFICATION BY MASS SPECTROMETRY [LARGE SCALE ANALYSIS]</scope>
</reference>
<reference key="28">
    <citation type="journal article" date="2018" name="Sci. Rep.">
        <title>Hepatitis C Virus Modulates Solute carrier family 3 member 2 for Viral Propagation.</title>
        <authorList>
            <person name="Nguyen N.N.T."/>
            <person name="Lim Y.S."/>
            <person name="Nguyen L.P."/>
            <person name="Tran S.C."/>
            <person name="Luong T.T.D."/>
            <person name="Nguyen T.T.T."/>
            <person name="Pham H.T."/>
            <person name="Mai H.N."/>
            <person name="Choi J.W."/>
            <person name="Han S.S."/>
            <person name="Hwang S.B."/>
        </authorList>
    </citation>
    <scope>FUNCTION (MICROBIAL INFECTION)</scope>
    <scope>INDUCTION BY HCV (MICROBIAL INFECTION)</scope>
</reference>
<reference evidence="32 33" key="29">
    <citation type="journal article" date="2019" name="Nature">
        <title>Structure of the human LAT1-4F2hc heteromeric amino acid transporter complex.</title>
        <authorList>
            <person name="Yan R."/>
            <person name="Zhao X."/>
            <person name="Lei J."/>
            <person name="Zhou Q."/>
        </authorList>
    </citation>
    <scope>STRUCTURE BY ELECTRON MICROSCOPY (3.30 ANGSTROMS) OF 2-507 IN COMPLEX WITH SLC3A2</scope>
    <scope>FUNCTION</scope>
    <scope>SUBUNIT</scope>
    <scope>TOPOLOGY</scope>
    <scope>DISULFIDE BOND</scope>
    <scope>MUTAGENESIS OF TYR-117; ALA-246; PHE-252; TRP-257; ASN-258; TYR-259; GLU-303; PRO-375 AND 483-LYS--THR-507</scope>
    <scope>TRANSPORTER ACTIVITY</scope>
</reference>
<keyword id="KW-0002">3D-structure</keyword>
<keyword id="KW-0029">Amino-acid transport</keyword>
<keyword id="KW-1003">Cell membrane</keyword>
<keyword id="KW-0903">Direct protein sequencing</keyword>
<keyword id="KW-1015">Disulfide bond</keyword>
<keyword id="KW-1017">Isopeptide bond</keyword>
<keyword id="KW-0458">Lysosome</keyword>
<keyword id="KW-0472">Membrane</keyword>
<keyword id="KW-0597">Phosphoprotein</keyword>
<keyword id="KW-1267">Proteomics identification</keyword>
<keyword id="KW-1185">Reference proteome</keyword>
<keyword id="KW-0812">Transmembrane</keyword>
<keyword id="KW-1133">Transmembrane helix</keyword>
<keyword id="KW-0813">Transport</keyword>
<keyword id="KW-0832">Ubl conjugation</keyword>
<organism>
    <name type="scientific">Homo sapiens</name>
    <name type="common">Human</name>
    <dbReference type="NCBI Taxonomy" id="9606"/>
    <lineage>
        <taxon>Eukaryota</taxon>
        <taxon>Metazoa</taxon>
        <taxon>Chordata</taxon>
        <taxon>Craniata</taxon>
        <taxon>Vertebrata</taxon>
        <taxon>Euteleostomi</taxon>
        <taxon>Mammalia</taxon>
        <taxon>Eutheria</taxon>
        <taxon>Euarchontoglires</taxon>
        <taxon>Primates</taxon>
        <taxon>Haplorrhini</taxon>
        <taxon>Catarrhini</taxon>
        <taxon>Hominidae</taxon>
        <taxon>Homo</taxon>
    </lineage>
</organism>
<comment type="function">
    <text evidence="1 2 4 6 8 9 11 12 15 19 20 22 23 30">The heterodimer with SLC3A2 functions as a sodium-independent, high-affinity transporter that mediates uptake of large neutral amino acids such as phenylalanine, tyrosine, leucine, histidine, methionine, tryptophan, valine, isoleucine and alanine (PubMed:10049700, PubMed:10574970, PubMed:11557028, PubMed:11564694, PubMed:12117417, PubMed:12225859, PubMed:15769744, PubMed:18262359, PubMed:25998567, PubMed:30867591, PubMed:9751058). The heterodimer with SLC3A2 mediates the uptake of L-DOPA (By similarity). Functions as an amino acid exchanger (PubMed:11557028, PubMed:12117417, PubMed:12225859, PubMed:30867591). May play a role in the transport of L-DOPA across the blood-brain barrier (By similarity). May act as the major transporter of tyrosine in fibroblasts (Probable). May mediate blood-to-retina L-leucine transport across the inner blood-retinal barrier (By similarity). Can mediate the transport of thyroid hormones diiodothyronine (T2), triiodothyronine (T3) and thyroxine (T4) across the cell membrane (PubMed:11564694). When associated with LAPTM4B, the heterodimer formed by SLC3A2 and SLC7A5 is recruited to lysosomes to promote leucine uptake into these organelles, and thereby mediates mTORC1 activation (PubMed:25998567). Involved in the uptake of toxic methylmercury (MeHg) when administered as the L-cysteine or D,L-homocysteine complexes (PubMed:12117417). Involved in the cellular activity of small molecular weight nitrosothiols, via the stereoselective transport of L-nitrosocysteine (L-CNSO) across the membrane (PubMed:15769744).</text>
</comment>
<comment type="function">
    <text evidence="21">(Microbial infection) In case of hepatitis C virus/HCV infection, the complex formed by SLC3A2 and SLC7A5/LAT1 plays a role in HCV propagation by facilitating viral entry into host cell and increasing L-leucine uptake-mediated mTORC1 signaling activation, thereby contributing to HCV-mediated pathogenesis.</text>
</comment>
<comment type="catalytic activity">
    <reaction evidence="4 6 8 9 23">
        <text>L-phenylalanine(in) = L-phenylalanine(out)</text>
        <dbReference type="Rhea" id="RHEA:27950"/>
        <dbReference type="ChEBI" id="CHEBI:58095"/>
    </reaction>
    <physiologicalReaction direction="right-to-left" evidence="28">
        <dbReference type="Rhea" id="RHEA:27952"/>
    </physiologicalReaction>
</comment>
<comment type="catalytic activity">
    <reaction evidence="4 6 8 9">
        <text>L-tryptophan(in) = L-tryptophan(out)</text>
        <dbReference type="Rhea" id="RHEA:70947"/>
        <dbReference type="ChEBI" id="CHEBI:57912"/>
    </reaction>
    <physiologicalReaction direction="right-to-left" evidence="28">
        <dbReference type="Rhea" id="RHEA:70949"/>
    </physiologicalReaction>
</comment>
<comment type="catalytic activity">
    <reaction evidence="4 6 8 23">
        <text>L-histidine(out) = L-histidine(in)</text>
        <dbReference type="Rhea" id="RHEA:72807"/>
        <dbReference type="ChEBI" id="CHEBI:57595"/>
    </reaction>
</comment>
<comment type="catalytic activity">
    <reaction evidence="4 6 8 9 12 15 20 22 23">
        <text>L-leucine(in) = L-leucine(out)</text>
        <dbReference type="Rhea" id="RHEA:73011"/>
        <dbReference type="ChEBI" id="CHEBI:57427"/>
    </reaction>
    <physiologicalReaction direction="right-to-left" evidence="28">
        <dbReference type="Rhea" id="RHEA:73013"/>
    </physiologicalReaction>
</comment>
<comment type="catalytic activity">
    <reaction evidence="8">
        <text>L-isoleucine(in) = L-isoleucine(out)</text>
        <dbReference type="Rhea" id="RHEA:70943"/>
        <dbReference type="ChEBI" id="CHEBI:58045"/>
    </reaction>
    <physiologicalReaction direction="right-to-left" evidence="29">
        <dbReference type="Rhea" id="RHEA:70945"/>
    </physiologicalReaction>
</comment>
<comment type="catalytic activity">
    <reaction evidence="8">
        <text>L-valine(in) = L-valine(out)</text>
        <dbReference type="Rhea" id="RHEA:29703"/>
        <dbReference type="ChEBI" id="CHEBI:57762"/>
    </reaction>
    <physiologicalReaction direction="right-to-left" evidence="29">
        <dbReference type="Rhea" id="RHEA:29705"/>
    </physiologicalReaction>
</comment>
<comment type="catalytic activity">
    <reaction evidence="8 9 19">
        <text>L-tyrosine(in) = L-tyrosine(out)</text>
        <dbReference type="Rhea" id="RHEA:68572"/>
        <dbReference type="ChEBI" id="CHEBI:58315"/>
    </reaction>
    <physiologicalReaction direction="right-to-left" evidence="29">
        <dbReference type="Rhea" id="RHEA:68574"/>
    </physiologicalReaction>
</comment>
<comment type="catalytic activity">
    <reaction evidence="8 11">
        <text>L-methionine(in) = L-methionine(out)</text>
        <dbReference type="Rhea" id="RHEA:70939"/>
        <dbReference type="ChEBI" id="CHEBI:57844"/>
    </reaction>
    <physiologicalReaction direction="right-to-left" evidence="29">
        <dbReference type="Rhea" id="RHEA:70941"/>
    </physiologicalReaction>
</comment>
<comment type="catalytic activity">
    <reaction evidence="19">
        <text>L-alanine(in) = L-alanine(out)</text>
        <dbReference type="Rhea" id="RHEA:70719"/>
        <dbReference type="ChEBI" id="CHEBI:57972"/>
    </reaction>
    <physiologicalReaction direction="right-to-left" evidence="30">
        <dbReference type="Rhea" id="RHEA:70721"/>
    </physiologicalReaction>
</comment>
<comment type="catalytic activity">
    <reaction evidence="9">
        <text>3,3'-diiodo-L-thyronine(out) = 3,3'-diiodo-L-thyronine(in)</text>
        <dbReference type="Rhea" id="RHEA:71823"/>
        <dbReference type="ChEBI" id="CHEBI:176514"/>
    </reaction>
</comment>
<comment type="catalytic activity">
    <reaction evidence="9">
        <text>3,3',5-triiodo-L-thyronine(out) = 3,3',5-triiodo-L-thyronine(in)</text>
        <dbReference type="Rhea" id="RHEA:71811"/>
        <dbReference type="ChEBI" id="CHEBI:533015"/>
    </reaction>
</comment>
<comment type="catalytic activity">
    <reaction evidence="9">
        <text>L-thyroxine(out) = L-thyroxine(in)</text>
        <dbReference type="Rhea" id="RHEA:71819"/>
        <dbReference type="ChEBI" id="CHEBI:58448"/>
    </reaction>
</comment>
<comment type="activity regulation">
    <text evidence="9 11 12 15 19">The uptake of leucine, tyrosine and tryptophan is inhibited by the different iodothyronines, in particular T3 (PubMed:11564694). The uptake of T3 is almost completely blocked by coincubation with leucine, tryptophan, tyrosine, and phenylalanine, or 2-amino-bicyclo-(2,2,1)-heptane-2-carboxylate (BCH) (PubMed:11564694). Methionine uptake was inhibited by the L-system substrates L-leucine, BCH, L-cysteine and by the MeHg-L-cysteine complex and structurally related S-ethyl-L-cysteine (PubMed:12117417). MeHg-L-cysteine uptake is inhibited by L-methionine, L-leucine, BCH and S-ethyl-L-cysteine (PubMed:12117417). L-leucine transport is inhibited by phenylalanine, tyrosine, L-dopa, 3-O-methyldopa, a-methyltyrosine, a-methyldopa, gabapentin, triiodothyronine, thyroxine, melphalan and BCH (PubMed:12225859). L-leucine uptake was inhibited by L-CNSO (PubMed:15769744). Tyrosine uptake in fibroblasts was inhibited by D-methionine, and methyl-aminoisobutyric acid (MeAIB) (PubMed:18262359).</text>
</comment>
<comment type="biophysicochemical properties">
    <kinetics>
        <KM evidence="9">7.9 uM for T4 (in the presence of choline chloride)</KM>
        <KM evidence="9">0.8 uM for T3 (in the presence of choline chloride)</KM>
        <KM evidence="9">12.5 uM for reverse triiodothyronine (rT3) (in the presence of choline chloride)</KM>
        <KM evidence="9">7.9 uM for T2 (in the presence of choline chloride)</KM>
        <KM evidence="9">46 uM for leucine (in the presence of choline chloride)</KM>
        <KM evidence="9">19 uM for tryptophan (in the presence of choline chloride)</KM>
        <KM evidence="8">19.7 uM for L-leucine</KM>
        <KM evidence="8">25.1 uM for L-isoleucine</KM>
        <KM evidence="8">14.2 uM for L-phenyalanine</KM>
        <KM evidence="8">20.2 uM for L-methionine</KM>
        <KM evidence="8">28.3 uM for L-tyrosine</KM>
        <KM evidence="8">12.7 uM for L-histidine</KM>
        <KM evidence="8">21.4 uM for L-tryptophan</KM>
        <KM evidence="8">47.2 uM for L-valine</KM>
        <KM evidence="11">98 uM for MeHg-L-cysteine</KM>
        <KM evidence="11">99 uM for methionine</KM>
        <KM evidence="12">100.5 uM for L-leucine</KM>
        <KM evidence="19">16.4 uM for tyrosine (in human fibroblasts)</KM>
        <Vmax evidence="12">23878.0 pmol/min/mg enzyme for L-leucine</Vmax>
        <Vmax evidence="19">8.4 nmol/min/mg enzyme for tyrosine (in human fibroblasts)</Vmax>
        <text>Km and Vmax values in PubMed:11564694 and PubMed:12225859 were determined for the heterodimer of SLC7A5/LAT1 and SLC3A2/4F2hc.</text>
    </kinetics>
</comment>
<comment type="subunit">
    <text evidence="4 6 7 8 9 11 12 15 20 22 23">Disulfide-linked heterodimer with the amino acid transport protein SLC3A2/4F2hc (PubMed:10049700, PubMed:10574970, PubMed:11389679, PubMed:11557028, PubMed:11564694, PubMed:12117417, PubMed:12225859, PubMed:15769744, PubMed:25998567, PubMed:30867591, PubMed:9751058). Interacts with LAPTM4B; this recruits the heterodimer formed by SLC3A2/4F2hc and SLC7A5 to lysosomes to promote leucine uptake into these organelles and is required for mTORC1 activation (PubMed:25998567).</text>
</comment>
<comment type="interaction">
    <interactant intactId="EBI-6138761">
        <id>Q01650</id>
    </interactant>
    <interactant intactId="EBI-702356">
        <id>P08195</id>
        <label>SLC3A2</label>
    </interactant>
    <organismsDiffer>false</organismsDiffer>
    <experiments>3</experiments>
</comment>
<comment type="interaction">
    <interactant intactId="EBI-6138761">
        <id>Q01650</id>
    </interactant>
    <interactant intactId="EBI-11614088">
        <id>P08195-1</id>
        <label>SLC3A2</label>
    </interactant>
    <organismsDiffer>false</organismsDiffer>
    <experiments>3</experiments>
</comment>
<comment type="subcellular location">
    <subcellularLocation>
        <location evidence="10">Apical cell membrane</location>
        <topology evidence="22">Multi-pass membrane protein</topology>
    </subcellularLocation>
    <subcellularLocation>
        <location evidence="8 12 20 23">Cell membrane</location>
        <topology evidence="22">Multi-pass membrane protein</topology>
    </subcellularLocation>
    <subcellularLocation>
        <location evidence="20">Lysosome membrane</location>
        <topology evidence="31">Multi-pass membrane protein</topology>
    </subcellularLocation>
    <text evidence="10 20 23">Located to the plasma membrane by SLC3A2/4F2hc (PubMed:9751058). Localized to the apical membrane of placental syncytiotrophoblastic cells (PubMed:11742812). Recruited to lysosomes by LAPTM4B (PubMed:25998567).</text>
</comment>
<comment type="tissue specificity">
    <text evidence="4 5 7 8 10 13 16 17 18">Detected in placenta, in the syncytiotrophoblast layer (at protein level) (PubMed:11389679). Expressed abundantly in adult lung, liver, brain, skeletal muscle, placenta, bone marrow, testis, resting lymphocytes and monocytes, and in fetal liver. Weaker expression in thymus, cornea, retina, peripheral leukocytes, spleen, kidney, colon and lymph node. During gestation, expression in the placenta was significantly stronger at full-term than at the mid-trimester stage. Also expressed in all human tumor cell lines tested and in the astrocytic process of primary astrocytic gliomas. Expressed in retinal endothelial cells and in the intestinal epithelial cell line Caco-2.</text>
</comment>
<comment type="induction">
    <text evidence="21">(Microbial infection) Up-regulation of the complex formed by SLC3A2 and SLC7A5/LAT1 upon hepatitis C virus/HCV infection.</text>
</comment>
<comment type="induction">
    <text evidence="10 16">Expression induced in quiescent peripheral blood lymphocytes after treatment with phorbol myristate acetate (PMA) and phytohemagglutinin (PHA). Expression and the uptake of leucine is stimulated in mononuclear, cytotrophoblast-like choriocarcinoma cells by combined treatment with PMA and calcium ionophore.</text>
</comment>
<comment type="similarity">
    <text evidence="27">Belongs to the amino acid-polyamine-organocation (APC) superfamily. L-type amino acid transporter (LAT) (TC 2.A.3.8) family.</text>
</comment>
<proteinExistence type="evidence at protein level"/>
<gene>
    <name type="primary">SLC7A5</name>
    <name type="synonym">CD98LC</name>
    <name evidence="24 25" type="synonym">LAT1</name>
    <name type="synonym">MPE16</name>
</gene>
<protein>
    <recommendedName>
        <fullName>Large neutral amino acids transporter small subunit 1</fullName>
    </recommendedName>
    <alternativeName>
        <fullName>4F2 light chain</fullName>
        <shortName>4F2 LC</shortName>
        <shortName>4F2LC</shortName>
    </alternativeName>
    <alternativeName>
        <fullName>CD98 light chain</fullName>
    </alternativeName>
    <alternativeName>
        <fullName evidence="26">Integral membrane protein E16</fullName>
        <shortName evidence="26">E16</shortName>
    </alternativeName>
    <alternativeName>
        <fullName evidence="25">L-type amino acid transporter 1</fullName>
        <shortName evidence="25">hLAT1</shortName>
    </alternativeName>
    <alternativeName>
        <fullName>Solute carrier family 7 member 5</fullName>
    </alternativeName>
    <alternativeName>
        <fullName>y+ system cationic amino acid transporter</fullName>
    </alternativeName>
</protein>
<sequence length="507" mass="55010">MAGAGPKRRALAAPAAEEKEEAREKMLAAKSADGSAPAGEGEGVTLQRNITLLNGVAIIVGTIIGSGIFVTPTGVLKEAGSPGLALVVWAACGVFSIVGALCYAELGTTISKSGGDYAYMLEVYGSLPAFLKLWIELLIIRPSSQYIVALVFATYLLKPLFPTCPVPEEAAKLVACLCVLLLTAVNCYSVKAATRVQDAFAAAKLLALALIILLGFVQIGKGDVSNLDPNFSFEGTKLDVGNIVLALYSGLFAYGGWNYLNFVTEEMINPYRNLPLAIIISLPIVTLVYVLTNLAYFTTLSTEQMLSSEAVAVDFGNYHLGVMSWIIPVFVGLSCFGSVNGSLFTSSRLFFVGSREGHLPSILSMIHPQLLTPVPSLVFTCVMTLLYAFSKDIFSVINFFSFFNWLCVALAIIGMIWLRHRKPELERPIKVNLALPVFFILACLFLIAVSFWKTPVECGIGFTIILSGLPVYFFGVWWKNKPKWLLQGIFSTTVLCQKLMQVVPQET</sequence>
<accession>Q01650</accession>
<accession>Q8IV97</accession>
<accession>Q9UBN8</accession>
<accession>Q9UP15</accession>
<accession>Q9UQC0</accession>
<feature type="chain" id="PRO_0000054270" description="Large neutral amino acids transporter small subunit 1">
    <location>
        <begin position="1"/>
        <end position="507"/>
    </location>
</feature>
<feature type="topological domain" description="Cytoplasmic" evidence="27">
    <location>
        <begin position="1"/>
        <end position="49"/>
    </location>
</feature>
<feature type="transmembrane region" description="Helical" evidence="22">
    <location>
        <begin position="50"/>
        <end position="70"/>
    </location>
</feature>
<feature type="topological domain" description="Extracellular" evidence="27">
    <location>
        <begin position="71"/>
        <end position="83"/>
    </location>
</feature>
<feature type="transmembrane region" description="Helical" evidence="22">
    <location>
        <begin position="84"/>
        <end position="104"/>
    </location>
</feature>
<feature type="topological domain" description="Cytoplasmic" evidence="27">
    <location>
        <begin position="105"/>
        <end position="126"/>
    </location>
</feature>
<feature type="transmembrane region" description="Helical" evidence="22">
    <location>
        <begin position="127"/>
        <end position="147"/>
    </location>
</feature>
<feature type="topological domain" description="Extracellular" evidence="27">
    <location>
        <begin position="148"/>
        <end position="169"/>
    </location>
</feature>
<feature type="transmembrane region" description="Helical" evidence="22">
    <location>
        <begin position="170"/>
        <end position="190"/>
    </location>
</feature>
<feature type="topological domain" description="Cytoplasmic" evidence="27">
    <location>
        <begin position="191"/>
        <end position="192"/>
    </location>
</feature>
<feature type="transmembrane region" description="Helical" evidence="22">
    <location>
        <begin position="193"/>
        <end position="214"/>
    </location>
</feature>
<feature type="topological domain" description="Extracellular" evidence="27">
    <location>
        <begin position="215"/>
        <end position="242"/>
    </location>
</feature>
<feature type="transmembrane region" description="Helical" evidence="22">
    <location>
        <begin position="243"/>
        <end position="263"/>
    </location>
</feature>
<feature type="topological domain" description="Cytoplasmic" evidence="27">
    <location>
        <begin position="264"/>
        <end position="276"/>
    </location>
</feature>
<feature type="transmembrane region" description="Helical" evidence="22">
    <location>
        <begin position="277"/>
        <end position="297"/>
    </location>
</feature>
<feature type="topological domain" description="Extracellular" evidence="27">
    <location>
        <begin position="298"/>
        <end position="324"/>
    </location>
</feature>
<feature type="transmembrane region" description="Helical" evidence="22">
    <location>
        <begin position="325"/>
        <end position="345"/>
    </location>
</feature>
<feature type="topological domain" description="Cytoplasmic" evidence="27">
    <location>
        <begin position="346"/>
        <end position="369"/>
    </location>
</feature>
<feature type="transmembrane region" description="Helical" evidence="22">
    <location>
        <begin position="370"/>
        <end position="390"/>
    </location>
</feature>
<feature type="topological domain" description="Extracellular" evidence="27">
    <location>
        <begin position="391"/>
        <end position="395"/>
    </location>
</feature>
<feature type="transmembrane region" description="Helical" evidence="22">
    <location>
        <begin position="396"/>
        <end position="416"/>
    </location>
</feature>
<feature type="topological domain" description="Cytoplasmic" evidence="27">
    <location>
        <begin position="417"/>
        <end position="430"/>
    </location>
</feature>
<feature type="transmembrane region" description="Helical" evidence="22">
    <location>
        <begin position="431"/>
        <end position="451"/>
    </location>
</feature>
<feature type="topological domain" description="Extracellular" evidence="27">
    <location>
        <begin position="452"/>
        <end position="457"/>
    </location>
</feature>
<feature type="transmembrane region" description="Helical" evidence="22">
    <location>
        <begin position="458"/>
        <end position="478"/>
    </location>
</feature>
<feature type="topological domain" description="Cytoplasmic" evidence="27">
    <location>
        <begin position="479"/>
        <end position="507"/>
    </location>
</feature>
<feature type="region of interest" description="Disordered" evidence="3">
    <location>
        <begin position="1"/>
        <end position="40"/>
    </location>
</feature>
<feature type="compositionally biased region" description="Basic residues" evidence="3">
    <location>
        <begin position="1"/>
        <end position="10"/>
    </location>
</feature>
<feature type="compositionally biased region" description="Basic and acidic residues" evidence="3">
    <location>
        <begin position="16"/>
        <end position="27"/>
    </location>
</feature>
<feature type="modified residue" description="Phosphoserine" evidence="34 35 36 37">
    <location>
        <position position="31"/>
    </location>
</feature>
<feature type="modified residue" description="Phosphoserine" evidence="37">
    <location>
        <position position="35"/>
    </location>
</feature>
<feature type="modified residue" description="Phosphothreonine" evidence="35 37">
    <location>
        <position position="45"/>
    </location>
</feature>
<feature type="disulfide bond" description="Interchain (with C-210 in SLC3A2)" evidence="22">
    <location>
        <position position="164"/>
    </location>
</feature>
<feature type="cross-link" description="Glycyl lysine isopeptide (Lys-Gly) (interchain with G-Cter in ubiquitin)">
    <location>
        <position position="19"/>
    </location>
</feature>
<feature type="cross-link" description="Glycyl lysine isopeptide (Lys-Gly) (interchain with G-Cter in ubiquitin)">
    <location>
        <position position="30"/>
    </location>
</feature>
<feature type="sequence variant" id="VAR_070119" description="In dbSNP:rs17853937." evidence="14">
    <original>D</original>
    <variation>V</variation>
    <location>
        <position position="223"/>
    </location>
</feature>
<feature type="sequence variant" id="VAR_048157" description="In dbSNP:rs1060250." evidence="23">
    <original>N</original>
    <variation>K</variation>
    <location>
        <position position="230"/>
    </location>
</feature>
<feature type="mutagenesis site" description="Strongly decreased leucine transport activity." evidence="22">
    <original>Y</original>
    <variation>A</variation>
    <location>
        <position position="117"/>
    </location>
</feature>
<feature type="mutagenesis site" description="Nearly abolishes leucine transport activity." evidence="22">
    <original>A</original>
    <variation>V</variation>
    <location>
        <position position="246"/>
    </location>
</feature>
<feature type="mutagenesis site" description="Nearly abolishes leucine transport activity." evidence="22">
    <original>F</original>
    <variation>A</variation>
    <location>
        <position position="252"/>
    </location>
</feature>
<feature type="mutagenesis site" description="Nearly abolishes leucine transport activity." evidence="22">
    <original>W</original>
    <variation>A</variation>
    <location>
        <position position="257"/>
    </location>
</feature>
<feature type="mutagenesis site" description="Decreased leucine transport activity." evidence="22">
    <original>N</original>
    <variation>A</variation>
    <location>
        <position position="258"/>
    </location>
</feature>
<feature type="mutagenesis site" description="Nearly abolishes leucine transport activity." evidence="22">
    <original>N</original>
    <variation>D</variation>
    <location>
        <position position="258"/>
    </location>
</feature>
<feature type="mutagenesis site" description="Strongly decreased leucine transport activity." evidence="22">
    <original>Y</original>
    <variation>A</variation>
    <location>
        <position position="259"/>
    </location>
</feature>
<feature type="mutagenesis site" description="Decreased leucine transport activity." evidence="22">
    <original>E</original>
    <variation>K</variation>
    <location>
        <position position="303"/>
    </location>
</feature>
<feature type="mutagenesis site" description="Nearly abolishes leucine transport activity." evidence="22">
    <original>P</original>
    <variation>L</variation>
    <location>
        <position position="375"/>
    </location>
</feature>
<feature type="mutagenesis site" description="Nearly abolishes leucine transport activity." evidence="22">
    <location>
        <begin position="483"/>
        <end position="507"/>
    </location>
</feature>
<feature type="sequence conflict" description="In Ref. 5; BAA75746." evidence="27" ref="5">
    <original>A</original>
    <variation>V</variation>
    <location>
        <position position="15"/>
    </location>
</feature>
<feature type="sequence conflict" description="In Ref. 5; BAA75746." evidence="27" ref="5">
    <original>AKS</original>
    <variation>SKR</variation>
    <location>
        <begin position="29"/>
        <end position="31"/>
    </location>
</feature>
<feature type="sequence conflict" description="In Ref. 5; BAA75746." evidence="27" ref="5">
    <original>S</original>
    <variation>A</variation>
    <location>
        <position position="35"/>
    </location>
</feature>
<feature type="sequence conflict" description="In Ref. 5; BAA75746." evidence="27" ref="5">
    <original>T</original>
    <variation>A</variation>
    <location>
        <position position="62"/>
    </location>
</feature>
<feature type="sequence conflict" description="In Ref. 5; BAA75746." evidence="27" ref="5">
    <original>V</original>
    <variation>M</variation>
    <location>
        <position position="88"/>
    </location>
</feature>
<feature type="sequence conflict" description="In Ref. 5; BAA75746." evidence="27" ref="5">
    <original>T</original>
    <variation>A</variation>
    <location>
        <position position="154"/>
    </location>
</feature>
<feature type="helix" evidence="39">
    <location>
        <begin position="52"/>
        <end position="63"/>
    </location>
</feature>
<feature type="strand" evidence="39">
    <location>
        <begin position="64"/>
        <end position="66"/>
    </location>
</feature>
<feature type="helix" evidence="39">
    <location>
        <begin position="67"/>
        <end position="70"/>
    </location>
</feature>
<feature type="helix" evidence="39">
    <location>
        <begin position="72"/>
        <end position="79"/>
    </location>
</feature>
<feature type="helix" evidence="39">
    <location>
        <begin position="82"/>
        <end position="109"/>
    </location>
</feature>
<feature type="turn" evidence="39">
    <location>
        <begin position="115"/>
        <end position="117"/>
    </location>
</feature>
<feature type="helix" evidence="39">
    <location>
        <begin position="118"/>
        <end position="124"/>
    </location>
</feature>
<feature type="helix" evidence="39">
    <location>
        <begin position="127"/>
        <end position="138"/>
    </location>
</feature>
<feature type="helix" evidence="39">
    <location>
        <begin position="140"/>
        <end position="156"/>
    </location>
</feature>
<feature type="turn" evidence="39">
    <location>
        <begin position="157"/>
        <end position="160"/>
    </location>
</feature>
<feature type="strand" evidence="43">
    <location>
        <begin position="161"/>
        <end position="164"/>
    </location>
</feature>
<feature type="helix" evidence="39">
    <location>
        <begin position="168"/>
        <end position="188"/>
    </location>
</feature>
<feature type="helix" evidence="39">
    <location>
        <begin position="190"/>
        <end position="219"/>
    </location>
</feature>
<feature type="strand" evidence="38">
    <location>
        <begin position="224"/>
        <end position="226"/>
    </location>
</feature>
<feature type="turn" evidence="39">
    <location>
        <begin position="229"/>
        <end position="235"/>
    </location>
</feature>
<feature type="turn" evidence="42">
    <location>
        <begin position="237"/>
        <end position="239"/>
    </location>
</feature>
<feature type="helix" evidence="39">
    <location>
        <begin position="240"/>
        <end position="242"/>
    </location>
</feature>
<feature type="helix" evidence="39">
    <location>
        <begin position="244"/>
        <end position="252"/>
    </location>
</feature>
<feature type="turn" evidence="40">
    <location>
        <begin position="253"/>
        <end position="258"/>
    </location>
</feature>
<feature type="turn" evidence="39">
    <location>
        <begin position="260"/>
        <end position="265"/>
    </location>
</feature>
<feature type="strand" evidence="39">
    <location>
        <begin position="266"/>
        <end position="269"/>
    </location>
</feature>
<feature type="helix" evidence="39">
    <location>
        <begin position="270"/>
        <end position="273"/>
    </location>
</feature>
<feature type="helix" evidence="39">
    <location>
        <begin position="275"/>
        <end position="297"/>
    </location>
</feature>
<feature type="helix" evidence="39">
    <location>
        <begin position="302"/>
        <end position="306"/>
    </location>
</feature>
<feature type="helix" evidence="39">
    <location>
        <begin position="311"/>
        <end position="319"/>
    </location>
</feature>
<feature type="strand" evidence="39">
    <location>
        <begin position="321"/>
        <end position="323"/>
    </location>
</feature>
<feature type="helix" evidence="39">
    <location>
        <begin position="326"/>
        <end position="355"/>
    </location>
</feature>
<feature type="strand" evidence="39">
    <location>
        <begin position="363"/>
        <end position="366"/>
    </location>
</feature>
<feature type="turn" evidence="39">
    <location>
        <begin position="368"/>
        <end position="370"/>
    </location>
</feature>
<feature type="helix" evidence="39">
    <location>
        <begin position="374"/>
        <end position="386"/>
    </location>
</feature>
<feature type="helix" evidence="39">
    <location>
        <begin position="387"/>
        <end position="389"/>
    </location>
</feature>
<feature type="helix" evidence="41">
    <location>
        <begin position="394"/>
        <end position="396"/>
    </location>
</feature>
<feature type="helix" evidence="39">
    <location>
        <begin position="397"/>
        <end position="421"/>
    </location>
</feature>
<feature type="helix" evidence="39">
    <location>
        <begin position="435"/>
        <end position="450"/>
    </location>
</feature>
<feature type="helix" evidence="39">
    <location>
        <begin position="455"/>
        <end position="465"/>
    </location>
</feature>
<feature type="helix" evidence="39">
    <location>
        <begin position="468"/>
        <end position="472"/>
    </location>
</feature>
<feature type="turn" evidence="39">
    <location>
        <begin position="473"/>
        <end position="476"/>
    </location>
</feature>
<feature type="helix" evidence="39">
    <location>
        <begin position="483"/>
        <end position="500"/>
    </location>
</feature>